<proteinExistence type="evidence at transcript level"/>
<comment type="function">
    <text evidence="1 2">Transfers N-acetylgalactosamine onto globotriaosylceramide. Plays a critical role in preimplantation stage embryonic development.</text>
</comment>
<comment type="catalytic activity">
    <reaction evidence="1">
        <text>a globoside Gb3Cer (d18:1(4E)) + UDP-N-acetyl-alpha-D-galactosamine = a globoside Gb4Cer (d18:1(4E)) + UDP + H(+)</text>
        <dbReference type="Rhea" id="RHEA:22252"/>
        <dbReference type="ChEBI" id="CHEBI:15378"/>
        <dbReference type="ChEBI" id="CHEBI:18259"/>
        <dbReference type="ChEBI" id="CHEBI:18313"/>
        <dbReference type="ChEBI" id="CHEBI:58223"/>
        <dbReference type="ChEBI" id="CHEBI:67138"/>
        <dbReference type="EC" id="2.4.1.79"/>
    </reaction>
    <physiologicalReaction direction="left-to-right" evidence="1">
        <dbReference type="Rhea" id="RHEA:22253"/>
    </physiologicalReaction>
</comment>
<comment type="cofactor">
    <cofactor evidence="1">
        <name>Mg(2+)</name>
        <dbReference type="ChEBI" id="CHEBI:18420"/>
    </cofactor>
</comment>
<comment type="pathway">
    <text>Protein modification; protein glycosylation.</text>
</comment>
<comment type="subcellular location">
    <subcellularLocation>
        <location evidence="1">Golgi apparatus membrane</location>
        <topology evidence="1">Single-pass type II membrane protein</topology>
    </subcellularLocation>
</comment>
<comment type="similarity">
    <text evidence="4">Belongs to the glycosyltransferase 31 family.</text>
</comment>
<accession>Q6AY39</accession>
<organism>
    <name type="scientific">Rattus norvegicus</name>
    <name type="common">Rat</name>
    <dbReference type="NCBI Taxonomy" id="10116"/>
    <lineage>
        <taxon>Eukaryota</taxon>
        <taxon>Metazoa</taxon>
        <taxon>Chordata</taxon>
        <taxon>Craniata</taxon>
        <taxon>Vertebrata</taxon>
        <taxon>Euteleostomi</taxon>
        <taxon>Mammalia</taxon>
        <taxon>Eutheria</taxon>
        <taxon>Euarchontoglires</taxon>
        <taxon>Glires</taxon>
        <taxon>Rodentia</taxon>
        <taxon>Myomorpha</taxon>
        <taxon>Muroidea</taxon>
        <taxon>Muridae</taxon>
        <taxon>Murinae</taxon>
        <taxon>Rattus</taxon>
    </lineage>
</organism>
<protein>
    <recommendedName>
        <fullName>UDP-GalNAc:beta-1,3-N-acetylgalactosaminyltransferase 1</fullName>
        <shortName>Beta-1,3-GalNAc-T1</shortName>
        <ecNumber evidence="1">2.4.1.79</ecNumber>
    </recommendedName>
    <alternativeName>
        <fullName>Beta-1,3-galactosyltransferase 3</fullName>
        <shortName>Beta-1,3-GalTase 3</shortName>
        <shortName>Beta3Gal-T3</shortName>
        <shortName>Beta3GalT3</shortName>
        <shortName>b3Gal-T3</shortName>
    </alternativeName>
    <alternativeName>
        <fullName>Beta-3-Gx-T3</fullName>
    </alternativeName>
    <alternativeName>
        <fullName>Galactosylgalactosylglucosylceramide beta-D-acetyl-galactosaminyltransferase</fullName>
    </alternativeName>
    <alternativeName>
        <fullName>Globoside synthase</fullName>
    </alternativeName>
    <alternativeName>
        <fullName>UDP-N-acetylgalactosamine:globotriaosylceramide beta-1,3-N-acetylgalactosaminyltransferase</fullName>
    </alternativeName>
</protein>
<sequence length="331" mass="39215">MAPAVLTAIPNRMSLRSLKWSLLLLSLLSFLVIWYLSLPHYNVIERVNWMYFYEYEPIYRQDFQFTLREHSNCSQQNPFLVILVTSRPSDVKARQAIRVTWGEKKTWWGHEVLTFFLLGQEAEREDKVLALSLEDEHALYGDIIRQDFLDTYNNLTLKTIMAFRWVIEFCPNAKYVMKTDTDVFINTGNLVKYLLNLNHSEKFFTGYPLIENYSYRGFFHKNHISYQEYPFKVFPPYCSGLGYIMSGDLVPKIYEMMGHVKPIKFEDVYVGICLNLLKVDIHIPEDTNLFFLFRIHLDVCQLRRVIAAHGFSSKEIITFWQVMLRNTTCHY</sequence>
<feature type="chain" id="PRO_0000219158" description="UDP-GalNAc:beta-1,3-N-acetylgalactosaminyltransferase 1">
    <location>
        <begin position="1"/>
        <end position="331"/>
    </location>
</feature>
<feature type="topological domain" description="Cytoplasmic" evidence="3">
    <location>
        <begin position="1"/>
        <end position="20"/>
    </location>
</feature>
<feature type="transmembrane region" description="Helical; Signal-anchor for type II membrane protein" evidence="3">
    <location>
        <begin position="21"/>
        <end position="43"/>
    </location>
</feature>
<feature type="topological domain" description="Lumenal" evidence="3">
    <location>
        <begin position="44"/>
        <end position="331"/>
    </location>
</feature>
<feature type="glycosylation site" description="N-linked (GlcNAc...) asparagine" evidence="3">
    <location>
        <position position="72"/>
    </location>
</feature>
<feature type="glycosylation site" description="N-linked (GlcNAc...) asparagine" evidence="3">
    <location>
        <position position="154"/>
    </location>
</feature>
<feature type="glycosylation site" description="N-linked (GlcNAc...) asparagine" evidence="3">
    <location>
        <position position="198"/>
    </location>
</feature>
<feature type="glycosylation site" description="N-linked (GlcNAc...) asparagine" evidence="3">
    <location>
        <position position="212"/>
    </location>
</feature>
<feature type="glycosylation site" description="N-linked (GlcNAc...) asparagine" evidence="3">
    <location>
        <position position="326"/>
    </location>
</feature>
<dbReference type="EC" id="2.4.1.79" evidence="1"/>
<dbReference type="EMBL" id="BC079206">
    <property type="protein sequence ID" value="AAH79206.1"/>
    <property type="molecule type" value="mRNA"/>
</dbReference>
<dbReference type="RefSeq" id="NP_001013176.1">
    <property type="nucleotide sequence ID" value="NM_001013158.2"/>
</dbReference>
<dbReference type="RefSeq" id="XP_017446356.1">
    <property type="nucleotide sequence ID" value="XM_017590867.3"/>
</dbReference>
<dbReference type="RefSeq" id="XP_017446357.1">
    <property type="nucleotide sequence ID" value="XM_017590868.1"/>
</dbReference>
<dbReference type="RefSeq" id="XP_017446358.1">
    <property type="nucleotide sequence ID" value="XM_017590869.3"/>
</dbReference>
<dbReference type="RefSeq" id="XP_017446359.1">
    <property type="nucleotide sequence ID" value="XM_017590870.3"/>
</dbReference>
<dbReference type="RefSeq" id="XP_038958217.1">
    <property type="nucleotide sequence ID" value="XM_039102289.2"/>
</dbReference>
<dbReference type="RefSeq" id="XP_038958218.1">
    <property type="nucleotide sequence ID" value="XM_039102290.2"/>
</dbReference>
<dbReference type="RefSeq" id="XP_038958219.1">
    <property type="nucleotide sequence ID" value="XM_039102291.2"/>
</dbReference>
<dbReference type="SMR" id="Q6AY39"/>
<dbReference type="FunCoup" id="Q6AY39">
    <property type="interactions" value="396"/>
</dbReference>
<dbReference type="STRING" id="10116.ENSRNOP00000016012"/>
<dbReference type="CAZy" id="GT31">
    <property type="family name" value="Glycosyltransferase Family 31"/>
</dbReference>
<dbReference type="GlyCosmos" id="Q6AY39">
    <property type="glycosylation" value="5 sites, No reported glycans"/>
</dbReference>
<dbReference type="GlyGen" id="Q6AY39">
    <property type="glycosylation" value="5 sites"/>
</dbReference>
<dbReference type="iPTMnet" id="Q6AY39"/>
<dbReference type="PhosphoSitePlus" id="Q6AY39"/>
<dbReference type="PaxDb" id="10116-ENSRNOP00000016012"/>
<dbReference type="Ensembl" id="ENSRNOT00000016012.6">
    <property type="protein sequence ID" value="ENSRNOP00000016012.3"/>
    <property type="gene ID" value="ENSRNOG00000012019.6"/>
</dbReference>
<dbReference type="Ensembl" id="ENSRNOT00000095435.1">
    <property type="protein sequence ID" value="ENSRNOP00000084772.1"/>
    <property type="gene ID" value="ENSRNOG00000012019.6"/>
</dbReference>
<dbReference type="Ensembl" id="ENSRNOT00000096998.1">
    <property type="protein sequence ID" value="ENSRNOP00000080226.1"/>
    <property type="gene ID" value="ENSRNOG00000012019.6"/>
</dbReference>
<dbReference type="Ensembl" id="ENSRNOT00000098966.1">
    <property type="protein sequence ID" value="ENSRNOP00000079867.1"/>
    <property type="gene ID" value="ENSRNOG00000012019.6"/>
</dbReference>
<dbReference type="Ensembl" id="ENSRNOT00000099448.1">
    <property type="protein sequence ID" value="ENSRNOP00000090410.1"/>
    <property type="gene ID" value="ENSRNOG00000012019.6"/>
</dbReference>
<dbReference type="Ensembl" id="ENSRNOT00000104541.1">
    <property type="protein sequence ID" value="ENSRNOP00000090178.1"/>
    <property type="gene ID" value="ENSRNOG00000012019.6"/>
</dbReference>
<dbReference type="Ensembl" id="ENSRNOT00000104797.1">
    <property type="protein sequence ID" value="ENSRNOP00000082877.1"/>
    <property type="gene ID" value="ENSRNOG00000012019.6"/>
</dbReference>
<dbReference type="Ensembl" id="ENSRNOT00000106160.1">
    <property type="protein sequence ID" value="ENSRNOP00000091655.1"/>
    <property type="gene ID" value="ENSRNOG00000012019.6"/>
</dbReference>
<dbReference type="Ensembl" id="ENSRNOT00000107768.1">
    <property type="protein sequence ID" value="ENSRNOP00000079916.1"/>
    <property type="gene ID" value="ENSRNOG00000012019.6"/>
</dbReference>
<dbReference type="Ensembl" id="ENSRNOT00000109215.1">
    <property type="protein sequence ID" value="ENSRNOP00000092519.1"/>
    <property type="gene ID" value="ENSRNOG00000012019.6"/>
</dbReference>
<dbReference type="GeneID" id="310508"/>
<dbReference type="KEGG" id="rno:310508"/>
<dbReference type="UCSC" id="RGD:1304797">
    <property type="organism name" value="rat"/>
</dbReference>
<dbReference type="AGR" id="RGD:1304797"/>
<dbReference type="CTD" id="8706"/>
<dbReference type="RGD" id="1304797">
    <property type="gene designation" value="B3galnt1"/>
</dbReference>
<dbReference type="eggNOG" id="KOG2287">
    <property type="taxonomic scope" value="Eukaryota"/>
</dbReference>
<dbReference type="GeneTree" id="ENSGT00940000162252"/>
<dbReference type="HOGENOM" id="CLU_036849_2_4_1"/>
<dbReference type="InParanoid" id="Q6AY39"/>
<dbReference type="OMA" id="DICKYRH"/>
<dbReference type="OrthoDB" id="45577at9989"/>
<dbReference type="PhylomeDB" id="Q6AY39"/>
<dbReference type="TreeFam" id="TF318639"/>
<dbReference type="Reactome" id="R-RNO-9840309">
    <property type="pathway name" value="Glycosphingolipid biosynthesis"/>
</dbReference>
<dbReference type="UniPathway" id="UPA00378"/>
<dbReference type="PRO" id="PR:Q6AY39"/>
<dbReference type="Proteomes" id="UP000002494">
    <property type="component" value="Chromosome 2"/>
</dbReference>
<dbReference type="Bgee" id="ENSRNOG00000012019">
    <property type="expression patterns" value="Expressed in stomach and 19 other cell types or tissues"/>
</dbReference>
<dbReference type="GO" id="GO:0000139">
    <property type="term" value="C:Golgi membrane"/>
    <property type="evidence" value="ECO:0000318"/>
    <property type="project" value="GO_Central"/>
</dbReference>
<dbReference type="GO" id="GO:0047273">
    <property type="term" value="F:galactosylgalactosylglucosylceramide beta-D-acetylgalactosaminyltransferase activity"/>
    <property type="evidence" value="ECO:0007669"/>
    <property type="project" value="UniProtKB-EC"/>
</dbReference>
<dbReference type="GO" id="GO:0008499">
    <property type="term" value="F:N-acetyl-beta-D-glucosaminide beta-(1,3)-galactosyltransferase activity"/>
    <property type="evidence" value="ECO:0000266"/>
    <property type="project" value="RGD"/>
</dbReference>
<dbReference type="GO" id="GO:0006629">
    <property type="term" value="P:lipid metabolic process"/>
    <property type="evidence" value="ECO:0007669"/>
    <property type="project" value="UniProtKB-KW"/>
</dbReference>
<dbReference type="GO" id="GO:0009312">
    <property type="term" value="P:oligosaccharide biosynthetic process"/>
    <property type="evidence" value="ECO:0000266"/>
    <property type="project" value="RGD"/>
</dbReference>
<dbReference type="GO" id="GO:0006493">
    <property type="term" value="P:protein O-linked glycosylation"/>
    <property type="evidence" value="ECO:0000318"/>
    <property type="project" value="GO_Central"/>
</dbReference>
<dbReference type="FunFam" id="3.90.550.50:FF:000001">
    <property type="entry name" value="Hexosyltransferase"/>
    <property type="match status" value="1"/>
</dbReference>
<dbReference type="Gene3D" id="3.90.550.50">
    <property type="match status" value="1"/>
</dbReference>
<dbReference type="InterPro" id="IPR002659">
    <property type="entry name" value="Glyco_trans_31"/>
</dbReference>
<dbReference type="PANTHER" id="PTHR11214">
    <property type="entry name" value="BETA-1,3-N-ACETYLGLUCOSAMINYLTRANSFERASE"/>
    <property type="match status" value="1"/>
</dbReference>
<dbReference type="PANTHER" id="PTHR11214:SF153">
    <property type="entry name" value="UDP-GALNAC:BETA-1,3-N-ACETYLGALACTOSAMINYLTRANSFERASE 1"/>
    <property type="match status" value="1"/>
</dbReference>
<dbReference type="Pfam" id="PF01762">
    <property type="entry name" value="Galactosyl_T"/>
    <property type="match status" value="1"/>
</dbReference>
<name>B3GL1_RAT</name>
<reference key="1">
    <citation type="journal article" date="2004" name="Genome Res.">
        <title>The status, quality, and expansion of the NIH full-length cDNA project: the Mammalian Gene Collection (MGC).</title>
        <authorList>
            <consortium name="The MGC Project Team"/>
        </authorList>
    </citation>
    <scope>NUCLEOTIDE SEQUENCE [LARGE SCALE MRNA]</scope>
    <source>
        <tissue>Testis</tissue>
    </source>
</reference>
<keyword id="KW-0325">Glycoprotein</keyword>
<keyword id="KW-0328">Glycosyltransferase</keyword>
<keyword id="KW-0333">Golgi apparatus</keyword>
<keyword id="KW-0443">Lipid metabolism</keyword>
<keyword id="KW-0460">Magnesium</keyword>
<keyword id="KW-0472">Membrane</keyword>
<keyword id="KW-1185">Reference proteome</keyword>
<keyword id="KW-0735">Signal-anchor</keyword>
<keyword id="KW-0808">Transferase</keyword>
<keyword id="KW-0812">Transmembrane</keyword>
<keyword id="KW-1133">Transmembrane helix</keyword>
<evidence type="ECO:0000250" key="1">
    <source>
        <dbReference type="UniProtKB" id="O75752"/>
    </source>
</evidence>
<evidence type="ECO:0000250" key="2">
    <source>
        <dbReference type="UniProtKB" id="Q920V1"/>
    </source>
</evidence>
<evidence type="ECO:0000255" key="3"/>
<evidence type="ECO:0000305" key="4"/>
<gene>
    <name type="primary">B3galnt1</name>
    <name type="synonym">B3galt3</name>
</gene>